<evidence type="ECO:0000250" key="1"/>
<evidence type="ECO:0000255" key="2"/>
<evidence type="ECO:0000256" key="3">
    <source>
        <dbReference type="SAM" id="MobiDB-lite"/>
    </source>
</evidence>
<evidence type="ECO:0000269" key="4">
    <source>
    </source>
</evidence>
<evidence type="ECO:0000305" key="5"/>
<sequence>MGIPCFYSSLISCLFSIITLVDVGQSSALTLSDSRLHPQSLEKSPWREFQCQHMLKHLHNGARVTVQMPPNIEGHWVSMGCEVRSGPEFITRSYRFYNNNTFKAYQHYYGNNHCTIPTYTLVIRGKIRLRQASWIIRGGTEADYQLHNVQIIPHSETVAEKLTWLVNHTCAGFVPGDMPWEPGISYDLWREEGGFKCTKALNFAMHELQLIRVEKQYMHHNLDHLVEELFLGDIHTDPSQRMYYRPSSYQPPLQNAKNHNQNCVACRIILRSDEHHPPILPAKADLPVGLNGEWVSQRCEVRPEVLFLTRHFIFNDNNHTWEGFYYHYSDPICKHPSFTIYAKGRYSRGVYSSKVMGGTEFVFKVNHMKVTPMDFATASLLNVFNGDECGAEGSWKVGVEQDVTHTNGCVALGIKLPHTEYELFRMEQDNRGRYLLYNGQRPSDGSSPARPEKRATSYQVPLVQCTSVSLNPEGAHDGQHKSQSRNSAAGHIFLYLFSNLFLLFICTLLHLEILS</sequence>
<name>APCD1_XENLA</name>
<comment type="function">
    <text evidence="4">Negative regulator of the Wnt signaling pathway. Inhibits Wnt signaling in a cell-autonomous manner and functions upstream of beta-catenin.</text>
</comment>
<comment type="subcellular location">
    <subcellularLocation>
        <location evidence="1">Cell membrane</location>
        <topology evidence="1">Single-pass type I membrane protein</topology>
    </subcellularLocation>
</comment>
<comment type="similarity">
    <text evidence="5">Belongs to the APCDD1 family.</text>
</comment>
<protein>
    <recommendedName>
        <fullName>Protein APCDD1</fullName>
    </recommendedName>
    <alternativeName>
        <fullName>Adenomatosis polyposis coli down-regulated 1 protein homolog</fullName>
    </alternativeName>
    <alternativeName>
        <fullName>Protein primglo</fullName>
        <shortName>xPgo</shortName>
    </alternativeName>
</protein>
<keyword id="KW-1003">Cell membrane</keyword>
<keyword id="KW-0325">Glycoprotein</keyword>
<keyword id="KW-0472">Membrane</keyword>
<keyword id="KW-1185">Reference proteome</keyword>
<keyword id="KW-0732">Signal</keyword>
<keyword id="KW-0812">Transmembrane</keyword>
<keyword id="KW-0879">Wnt signaling pathway</keyword>
<proteinExistence type="evidence at transcript level"/>
<gene>
    <name type="primary">apcdd1</name>
</gene>
<accession>Q66KI8</accession>
<accession>Q4R1K0</accession>
<feature type="signal peptide" evidence="2">
    <location>
        <begin position="1"/>
        <end position="28"/>
    </location>
</feature>
<feature type="chain" id="PRO_0000395840" description="Protein APCDD1">
    <location>
        <begin position="29"/>
        <end position="515"/>
    </location>
</feature>
<feature type="topological domain" description="Extracellular" evidence="2">
    <location>
        <begin position="29"/>
        <end position="488"/>
    </location>
</feature>
<feature type="transmembrane region" evidence="2">
    <location>
        <begin position="489"/>
        <end position="509"/>
    </location>
</feature>
<feature type="topological domain" description="Cytoplasmic" evidence="2">
    <location>
        <begin position="510"/>
        <end position="515"/>
    </location>
</feature>
<feature type="region of interest" description="Disordered" evidence="3">
    <location>
        <begin position="438"/>
        <end position="457"/>
    </location>
</feature>
<feature type="glycosylation site" description="N-linked (GlcNAc...) asparagine" evidence="2">
    <location>
        <position position="99"/>
    </location>
</feature>
<feature type="glycosylation site" description="N-linked (GlcNAc...) asparagine" evidence="2">
    <location>
        <position position="167"/>
    </location>
</feature>
<feature type="glycosylation site" description="N-linked (GlcNAc...) asparagine" evidence="2">
    <location>
        <position position="318"/>
    </location>
</feature>
<feature type="sequence conflict" description="In Ref. 1; BAE02564." evidence="5" ref="1">
    <original>N</original>
    <variation>D</variation>
    <location>
        <position position="100"/>
    </location>
</feature>
<feature type="sequence conflict" description="In Ref. 1; BAE02564." evidence="5" ref="1">
    <original>D</original>
    <variation>H</variation>
    <location>
        <position position="177"/>
    </location>
</feature>
<feature type="sequence conflict" description="In Ref. 1; BAE02564." evidence="5" ref="1">
    <original>K</original>
    <variation>E</variation>
    <location>
        <position position="215"/>
    </location>
</feature>
<feature type="sequence conflict" description="In Ref. 1; BAE02564." evidence="5" ref="1">
    <original>L</original>
    <variation>V</variation>
    <location>
        <position position="462"/>
    </location>
</feature>
<reference key="1">
    <citation type="submission" date="2004-12" db="EMBL/GenBank/DDBJ databases">
        <title>Primglo, a Wnt target novel endoplasmic reticulum protein that modulates Wnt signaling.</title>
        <authorList>
            <person name="Kimura J."/>
            <person name="Kuroiwa A."/>
        </authorList>
    </citation>
    <scope>NUCLEOTIDE SEQUENCE [MRNA]</scope>
</reference>
<reference key="2">
    <citation type="submission" date="2004-08" db="EMBL/GenBank/DDBJ databases">
        <authorList>
            <consortium name="NIH - Xenopus Gene Collection (XGC) project"/>
        </authorList>
    </citation>
    <scope>NUCLEOTIDE SEQUENCE [LARGE SCALE MRNA]</scope>
    <source>
        <tissue>Embryo</tissue>
    </source>
</reference>
<reference key="3">
    <citation type="journal article" date="2010" name="Nature">
        <title>APCDD1 is a novel Wnt inhibitor mutated in hereditary hypotrichosis simplex.</title>
        <authorList>
            <person name="Shimomura Y."/>
            <person name="Agalliu D."/>
            <person name="Vonica A."/>
            <person name="Luria V."/>
            <person name="Wajid M."/>
            <person name="Baumer A."/>
            <person name="Belli S."/>
            <person name="Petukhova L."/>
            <person name="Schinzel A."/>
            <person name="Brivanlou A.H."/>
            <person name="Barres B.A."/>
            <person name="Christiano A.M."/>
        </authorList>
    </citation>
    <scope>FUNCTION</scope>
</reference>
<dbReference type="EMBL" id="AB196973">
    <property type="protein sequence ID" value="BAE02564.1"/>
    <property type="molecule type" value="mRNA"/>
</dbReference>
<dbReference type="EMBL" id="BC080377">
    <property type="protein sequence ID" value="AAH80377.1"/>
    <property type="molecule type" value="mRNA"/>
</dbReference>
<dbReference type="RefSeq" id="NP_001087578.1">
    <property type="nucleotide sequence ID" value="NM_001094109.1"/>
</dbReference>
<dbReference type="SMR" id="Q66KI8"/>
<dbReference type="GlyCosmos" id="Q66KI8">
    <property type="glycosylation" value="3 sites, No reported glycans"/>
</dbReference>
<dbReference type="GeneID" id="447402"/>
<dbReference type="KEGG" id="xla:447402"/>
<dbReference type="AGR" id="Xenbase:XB-GENE-5762142"/>
<dbReference type="CTD" id="447402"/>
<dbReference type="Xenbase" id="XB-GENE-5762142">
    <property type="gene designation" value="apcdd1.L"/>
</dbReference>
<dbReference type="OMA" id="MPLIQCT"/>
<dbReference type="OrthoDB" id="5985602at2759"/>
<dbReference type="Proteomes" id="UP000186698">
    <property type="component" value="Chromosome 6L"/>
</dbReference>
<dbReference type="Bgee" id="447402">
    <property type="expression patterns" value="Expressed in ovary and 15 other cell types or tissues"/>
</dbReference>
<dbReference type="GO" id="GO:0005886">
    <property type="term" value="C:plasma membrane"/>
    <property type="evidence" value="ECO:0000250"/>
    <property type="project" value="UniProtKB"/>
</dbReference>
<dbReference type="GO" id="GO:0017147">
    <property type="term" value="F:Wnt-protein binding"/>
    <property type="evidence" value="ECO:0000250"/>
    <property type="project" value="UniProtKB"/>
</dbReference>
<dbReference type="GO" id="GO:0030178">
    <property type="term" value="P:negative regulation of Wnt signaling pathway"/>
    <property type="evidence" value="ECO:0000314"/>
    <property type="project" value="UniProtKB"/>
</dbReference>
<dbReference type="GO" id="GO:0016055">
    <property type="term" value="P:Wnt signaling pathway"/>
    <property type="evidence" value="ECO:0007669"/>
    <property type="project" value="UniProtKB-KW"/>
</dbReference>
<dbReference type="InterPro" id="IPR042425">
    <property type="entry name" value="APCDD1"/>
</dbReference>
<dbReference type="InterPro" id="IPR029405">
    <property type="entry name" value="APCDD1_dom"/>
</dbReference>
<dbReference type="PANTHER" id="PTHR31021">
    <property type="entry name" value="ADENOMATOSIS POLYPOSIS COLI DOWN-REGULATED 1"/>
    <property type="match status" value="1"/>
</dbReference>
<dbReference type="PANTHER" id="PTHR31021:SF2">
    <property type="entry name" value="PROTEIN APCDD1"/>
    <property type="match status" value="1"/>
</dbReference>
<dbReference type="Pfam" id="PF14921">
    <property type="entry name" value="APCDDC"/>
    <property type="match status" value="2"/>
</dbReference>
<dbReference type="SMART" id="SM01352">
    <property type="entry name" value="APCDDC"/>
    <property type="match status" value="2"/>
</dbReference>
<organism>
    <name type="scientific">Xenopus laevis</name>
    <name type="common">African clawed frog</name>
    <dbReference type="NCBI Taxonomy" id="8355"/>
    <lineage>
        <taxon>Eukaryota</taxon>
        <taxon>Metazoa</taxon>
        <taxon>Chordata</taxon>
        <taxon>Craniata</taxon>
        <taxon>Vertebrata</taxon>
        <taxon>Euteleostomi</taxon>
        <taxon>Amphibia</taxon>
        <taxon>Batrachia</taxon>
        <taxon>Anura</taxon>
        <taxon>Pipoidea</taxon>
        <taxon>Pipidae</taxon>
        <taxon>Xenopodinae</taxon>
        <taxon>Xenopus</taxon>
        <taxon>Xenopus</taxon>
    </lineage>
</organism>